<keyword id="KW-0963">Cytoplasm</keyword>
<keyword id="KW-0489">Methyltransferase</keyword>
<keyword id="KW-1185">Reference proteome</keyword>
<keyword id="KW-0698">rRNA processing</keyword>
<keyword id="KW-0949">S-adenosyl-L-methionine</keyword>
<keyword id="KW-0808">Transferase</keyword>
<accession>Q21WP8</accession>
<reference key="1">
    <citation type="submission" date="2006-02" db="EMBL/GenBank/DDBJ databases">
        <title>Complete sequence of chromosome of Rhodoferax ferrireducens DSM 15236.</title>
        <authorList>
            <person name="Copeland A."/>
            <person name="Lucas S."/>
            <person name="Lapidus A."/>
            <person name="Barry K."/>
            <person name="Detter J.C."/>
            <person name="Glavina del Rio T."/>
            <person name="Hammon N."/>
            <person name="Israni S."/>
            <person name="Pitluck S."/>
            <person name="Brettin T."/>
            <person name="Bruce D."/>
            <person name="Han C."/>
            <person name="Tapia R."/>
            <person name="Gilna P."/>
            <person name="Kiss H."/>
            <person name="Schmutz J."/>
            <person name="Larimer F."/>
            <person name="Land M."/>
            <person name="Kyrpides N."/>
            <person name="Ivanova N."/>
            <person name="Richardson P."/>
        </authorList>
    </citation>
    <scope>NUCLEOTIDE SEQUENCE [LARGE SCALE GENOMIC DNA]</scope>
    <source>
        <strain>ATCC BAA-621 / DSM 15236 / T118</strain>
    </source>
</reference>
<feature type="chain" id="PRO_0000260596" description="Ribosomal RNA large subunit methyltransferase H">
    <location>
        <begin position="1"/>
        <end position="155"/>
    </location>
</feature>
<feature type="binding site" evidence="1">
    <location>
        <position position="72"/>
    </location>
    <ligand>
        <name>S-adenosyl-L-methionine</name>
        <dbReference type="ChEBI" id="CHEBI:59789"/>
    </ligand>
</feature>
<feature type="binding site" evidence="1">
    <location>
        <position position="103"/>
    </location>
    <ligand>
        <name>S-adenosyl-L-methionine</name>
        <dbReference type="ChEBI" id="CHEBI:59789"/>
    </ligand>
</feature>
<feature type="binding site" evidence="1">
    <location>
        <begin position="122"/>
        <end position="127"/>
    </location>
    <ligand>
        <name>S-adenosyl-L-methionine</name>
        <dbReference type="ChEBI" id="CHEBI:59789"/>
    </ligand>
</feature>
<dbReference type="EC" id="2.1.1.177" evidence="1"/>
<dbReference type="EMBL" id="CP000267">
    <property type="protein sequence ID" value="ABD69805.1"/>
    <property type="molecule type" value="Genomic_DNA"/>
</dbReference>
<dbReference type="RefSeq" id="WP_011464373.1">
    <property type="nucleotide sequence ID" value="NC_007908.1"/>
</dbReference>
<dbReference type="SMR" id="Q21WP8"/>
<dbReference type="STRING" id="338969.Rfer_2080"/>
<dbReference type="KEGG" id="rfr:Rfer_2080"/>
<dbReference type="eggNOG" id="COG1576">
    <property type="taxonomic scope" value="Bacteria"/>
</dbReference>
<dbReference type="HOGENOM" id="CLU_100552_1_0_4"/>
<dbReference type="OrthoDB" id="9806643at2"/>
<dbReference type="Proteomes" id="UP000008332">
    <property type="component" value="Chromosome"/>
</dbReference>
<dbReference type="GO" id="GO:0005737">
    <property type="term" value="C:cytoplasm"/>
    <property type="evidence" value="ECO:0007669"/>
    <property type="project" value="UniProtKB-SubCell"/>
</dbReference>
<dbReference type="GO" id="GO:0070038">
    <property type="term" value="F:rRNA (pseudouridine-N3-)-methyltransferase activity"/>
    <property type="evidence" value="ECO:0007669"/>
    <property type="project" value="UniProtKB-UniRule"/>
</dbReference>
<dbReference type="CDD" id="cd18081">
    <property type="entry name" value="RlmH-like"/>
    <property type="match status" value="1"/>
</dbReference>
<dbReference type="Gene3D" id="3.40.1280.10">
    <property type="match status" value="1"/>
</dbReference>
<dbReference type="HAMAP" id="MF_00658">
    <property type="entry name" value="23SrRNA_methyltr_H"/>
    <property type="match status" value="1"/>
</dbReference>
<dbReference type="InterPro" id="IPR029028">
    <property type="entry name" value="Alpha/beta_knot_MTases"/>
</dbReference>
<dbReference type="InterPro" id="IPR003742">
    <property type="entry name" value="RlmH-like"/>
</dbReference>
<dbReference type="InterPro" id="IPR029026">
    <property type="entry name" value="tRNA_m1G_MTases_N"/>
</dbReference>
<dbReference type="NCBIfam" id="NF000986">
    <property type="entry name" value="PRK00103.1-4"/>
    <property type="match status" value="1"/>
</dbReference>
<dbReference type="PANTHER" id="PTHR33603">
    <property type="entry name" value="METHYLTRANSFERASE"/>
    <property type="match status" value="1"/>
</dbReference>
<dbReference type="PANTHER" id="PTHR33603:SF1">
    <property type="entry name" value="RIBOSOMAL RNA LARGE SUBUNIT METHYLTRANSFERASE H"/>
    <property type="match status" value="1"/>
</dbReference>
<dbReference type="Pfam" id="PF02590">
    <property type="entry name" value="SPOUT_MTase"/>
    <property type="match status" value="1"/>
</dbReference>
<dbReference type="PIRSF" id="PIRSF004505">
    <property type="entry name" value="MT_bac"/>
    <property type="match status" value="1"/>
</dbReference>
<dbReference type="SUPFAM" id="SSF75217">
    <property type="entry name" value="alpha/beta knot"/>
    <property type="match status" value="1"/>
</dbReference>
<organism>
    <name type="scientific">Albidiferax ferrireducens (strain ATCC BAA-621 / DSM 15236 / T118)</name>
    <name type="common">Rhodoferax ferrireducens</name>
    <dbReference type="NCBI Taxonomy" id="338969"/>
    <lineage>
        <taxon>Bacteria</taxon>
        <taxon>Pseudomonadati</taxon>
        <taxon>Pseudomonadota</taxon>
        <taxon>Betaproteobacteria</taxon>
        <taxon>Burkholderiales</taxon>
        <taxon>Comamonadaceae</taxon>
        <taxon>Rhodoferax</taxon>
    </lineage>
</organism>
<evidence type="ECO:0000255" key="1">
    <source>
        <dbReference type="HAMAP-Rule" id="MF_00658"/>
    </source>
</evidence>
<name>RLMH_ALBFT</name>
<comment type="function">
    <text evidence="1">Specifically methylates the pseudouridine at position 1915 (m3Psi1915) in 23S rRNA.</text>
</comment>
<comment type="catalytic activity">
    <reaction evidence="1">
        <text>pseudouridine(1915) in 23S rRNA + S-adenosyl-L-methionine = N(3)-methylpseudouridine(1915) in 23S rRNA + S-adenosyl-L-homocysteine + H(+)</text>
        <dbReference type="Rhea" id="RHEA:42752"/>
        <dbReference type="Rhea" id="RHEA-COMP:10221"/>
        <dbReference type="Rhea" id="RHEA-COMP:10222"/>
        <dbReference type="ChEBI" id="CHEBI:15378"/>
        <dbReference type="ChEBI" id="CHEBI:57856"/>
        <dbReference type="ChEBI" id="CHEBI:59789"/>
        <dbReference type="ChEBI" id="CHEBI:65314"/>
        <dbReference type="ChEBI" id="CHEBI:74486"/>
        <dbReference type="EC" id="2.1.1.177"/>
    </reaction>
</comment>
<comment type="subunit">
    <text evidence="1">Homodimer.</text>
</comment>
<comment type="subcellular location">
    <subcellularLocation>
        <location evidence="1">Cytoplasm</location>
    </subcellularLocation>
</comment>
<comment type="similarity">
    <text evidence="1">Belongs to the RNA methyltransferase RlmH family.</text>
</comment>
<sequence length="155" mass="17341">MRLVIVAVGQRVPDWAQTAWDDYAKRFPFELKVELKAVKTEPRGSKTVEALVAAERGRIEAALPKGCRIVALDERGTPLTTLALAAKLQNWQLESDDVALVIGGPDGLDPAFKQAAHERIRLSDLTLPHAMVRVLLIEQLYRAWSINANHPYHRE</sequence>
<protein>
    <recommendedName>
        <fullName evidence="1">Ribosomal RNA large subunit methyltransferase H</fullName>
        <ecNumber evidence="1">2.1.1.177</ecNumber>
    </recommendedName>
    <alternativeName>
        <fullName evidence="1">23S rRNA (pseudouridine1915-N3)-methyltransferase</fullName>
    </alternativeName>
    <alternativeName>
        <fullName evidence="1">23S rRNA m3Psi1915 methyltransferase</fullName>
    </alternativeName>
    <alternativeName>
        <fullName evidence="1">rRNA (pseudouridine-N3-)-methyltransferase RlmH</fullName>
    </alternativeName>
</protein>
<proteinExistence type="inferred from homology"/>
<gene>
    <name evidence="1" type="primary">rlmH</name>
    <name type="ordered locus">Rfer_2080</name>
</gene>